<organism>
    <name type="scientific">Escherichia coli O139:H28 (strain E24377A / ETEC)</name>
    <dbReference type="NCBI Taxonomy" id="331111"/>
    <lineage>
        <taxon>Bacteria</taxon>
        <taxon>Pseudomonadati</taxon>
        <taxon>Pseudomonadota</taxon>
        <taxon>Gammaproteobacteria</taxon>
        <taxon>Enterobacterales</taxon>
        <taxon>Enterobacteriaceae</taxon>
        <taxon>Escherichia</taxon>
    </lineage>
</organism>
<evidence type="ECO:0000255" key="1">
    <source>
        <dbReference type="HAMAP-Rule" id="MF_00744"/>
    </source>
</evidence>
<gene>
    <name evidence="1" type="primary">metJ</name>
    <name type="ordered locus">EcE24377A_4478</name>
</gene>
<keyword id="KW-0028">Amino-acid biosynthesis</keyword>
<keyword id="KW-0963">Cytoplasm</keyword>
<keyword id="KW-0238">DNA-binding</keyword>
<keyword id="KW-0486">Methionine biosynthesis</keyword>
<keyword id="KW-1185">Reference proteome</keyword>
<keyword id="KW-0678">Repressor</keyword>
<keyword id="KW-0804">Transcription</keyword>
<keyword id="KW-0805">Transcription regulation</keyword>
<sequence>MAEWSGEYISPYAEHGKKSEQVKKITVSIPLKVLKILTDERTRRQVNNLRHATNSELLCEAFLHAFTGQPLPDDADLRKERSDEIPEAAKEIMREMGINPETWEY</sequence>
<dbReference type="EMBL" id="CP000800">
    <property type="protein sequence ID" value="ABV17351.1"/>
    <property type="molecule type" value="Genomic_DNA"/>
</dbReference>
<dbReference type="RefSeq" id="WP_000852812.1">
    <property type="nucleotide sequence ID" value="NC_009801.1"/>
</dbReference>
<dbReference type="SMR" id="A7ZUF7"/>
<dbReference type="GeneID" id="93777954"/>
<dbReference type="KEGG" id="ecw:EcE24377A_4478"/>
<dbReference type="HOGENOM" id="CLU_142318_0_0_6"/>
<dbReference type="Proteomes" id="UP000001122">
    <property type="component" value="Chromosome"/>
</dbReference>
<dbReference type="GO" id="GO:0005737">
    <property type="term" value="C:cytoplasm"/>
    <property type="evidence" value="ECO:0007669"/>
    <property type="project" value="UniProtKB-SubCell"/>
</dbReference>
<dbReference type="GO" id="GO:0003677">
    <property type="term" value="F:DNA binding"/>
    <property type="evidence" value="ECO:0007669"/>
    <property type="project" value="UniProtKB-KW"/>
</dbReference>
<dbReference type="GO" id="GO:0003700">
    <property type="term" value="F:DNA-binding transcription factor activity"/>
    <property type="evidence" value="ECO:0007669"/>
    <property type="project" value="InterPro"/>
</dbReference>
<dbReference type="GO" id="GO:0009086">
    <property type="term" value="P:methionine biosynthetic process"/>
    <property type="evidence" value="ECO:0007669"/>
    <property type="project" value="UniProtKB-UniRule"/>
</dbReference>
<dbReference type="GO" id="GO:0045892">
    <property type="term" value="P:negative regulation of DNA-templated transcription"/>
    <property type="evidence" value="ECO:0007669"/>
    <property type="project" value="UniProtKB-UniRule"/>
</dbReference>
<dbReference type="CDD" id="cd00490">
    <property type="entry name" value="Met_repressor_MetJ"/>
    <property type="match status" value="1"/>
</dbReference>
<dbReference type="FunFam" id="1.10.140.10:FF:000001">
    <property type="entry name" value="Met repressor"/>
    <property type="match status" value="1"/>
</dbReference>
<dbReference type="Gene3D" id="1.10.140.10">
    <property type="entry name" value="MET Apo-Repressor, subunit A"/>
    <property type="match status" value="1"/>
</dbReference>
<dbReference type="HAMAP" id="MF_00744">
    <property type="entry name" value="MetJ"/>
    <property type="match status" value="1"/>
</dbReference>
<dbReference type="InterPro" id="IPR002084">
    <property type="entry name" value="Met_repressor_MetJ"/>
</dbReference>
<dbReference type="InterPro" id="IPR023453">
    <property type="entry name" value="Met_repressor_MetJ_dom_sf"/>
</dbReference>
<dbReference type="InterPro" id="IPR010985">
    <property type="entry name" value="Ribbon_hlx_hlx"/>
</dbReference>
<dbReference type="NCBIfam" id="NF003622">
    <property type="entry name" value="PRK05264.1"/>
    <property type="match status" value="1"/>
</dbReference>
<dbReference type="Pfam" id="PF01340">
    <property type="entry name" value="MetJ"/>
    <property type="match status" value="1"/>
</dbReference>
<dbReference type="SUPFAM" id="SSF47598">
    <property type="entry name" value="Ribbon-helix-helix"/>
    <property type="match status" value="1"/>
</dbReference>
<proteinExistence type="inferred from homology"/>
<feature type="chain" id="PRO_1000062170" description="Met repressor">
    <location>
        <begin position="1"/>
        <end position="105"/>
    </location>
</feature>
<reference key="1">
    <citation type="journal article" date="2008" name="J. Bacteriol.">
        <title>The pangenome structure of Escherichia coli: comparative genomic analysis of E. coli commensal and pathogenic isolates.</title>
        <authorList>
            <person name="Rasko D.A."/>
            <person name="Rosovitz M.J."/>
            <person name="Myers G.S.A."/>
            <person name="Mongodin E.F."/>
            <person name="Fricke W.F."/>
            <person name="Gajer P."/>
            <person name="Crabtree J."/>
            <person name="Sebaihia M."/>
            <person name="Thomson N.R."/>
            <person name="Chaudhuri R."/>
            <person name="Henderson I.R."/>
            <person name="Sperandio V."/>
            <person name="Ravel J."/>
        </authorList>
    </citation>
    <scope>NUCLEOTIDE SEQUENCE [LARGE SCALE GENOMIC DNA]</scope>
    <source>
        <strain>E24377A / ETEC</strain>
    </source>
</reference>
<accession>A7ZUF7</accession>
<comment type="function">
    <text evidence="1">This regulatory protein, when combined with SAM (S-adenosylmethionine) represses the expression of the methionine regulon and of enzymes involved in SAM synthesis.</text>
</comment>
<comment type="subunit">
    <text evidence="1">Homodimer.</text>
</comment>
<comment type="subcellular location">
    <subcellularLocation>
        <location evidence="1">Cytoplasm</location>
    </subcellularLocation>
</comment>
<comment type="domain">
    <text>Does not bind DNA by a helix-turn-helix motif.</text>
</comment>
<comment type="similarity">
    <text evidence="1">Belongs to the MetJ family.</text>
</comment>
<name>METJ_ECO24</name>
<protein>
    <recommendedName>
        <fullName evidence="1">Met repressor</fullName>
    </recommendedName>
    <alternativeName>
        <fullName evidence="1">Met regulon regulatory protein MetJ</fullName>
    </alternativeName>
</protein>